<proteinExistence type="inferred from homology"/>
<gene>
    <name type="primary">emm24</name>
</gene>
<evidence type="ECO:0000255" key="1"/>
<evidence type="ECO:0000255" key="2">
    <source>
        <dbReference type="PROSITE-ProRule" id="PRU00477"/>
    </source>
</evidence>
<evidence type="ECO:0000255" key="3">
    <source>
        <dbReference type="PROSITE-ProRule" id="PRU01372"/>
    </source>
</evidence>
<evidence type="ECO:0000255" key="4">
    <source>
        <dbReference type="PROSITE-ProRule" id="PRU01374"/>
    </source>
</evidence>
<evidence type="ECO:0000256" key="5">
    <source>
        <dbReference type="SAM" id="MobiDB-lite"/>
    </source>
</evidence>
<evidence type="ECO:0000305" key="6"/>
<name>M24_STRPY</name>
<comment type="function">
    <text>This protein is one of the different antigenic serotypes of protein M. Protein M is closely associated with virulence of the bacterium and can render the organism resistant to phagocytosis.</text>
</comment>
<comment type="subcellular location">
    <subcellularLocation>
        <location evidence="2">Secreted</location>
        <location evidence="2">Cell wall</location>
        <topology evidence="2">Peptidoglycan-anchor</topology>
    </subcellularLocation>
</comment>
<comment type="similarity">
    <text evidence="6">Belongs to the M protein family.</text>
</comment>
<reference key="1">
    <citation type="journal article" date="1988" name="J. Bacteriol.">
        <title>Molecular evolution of streptococcal M protein: cloning and nucleotide sequence of the type 24 M protein gene and relation to other genes of Streptococcus pyogenes.</title>
        <authorList>
            <person name="Mouw A.R."/>
            <person name="Beachey E.H."/>
            <person name="Burdett V."/>
        </authorList>
    </citation>
    <scope>NUCLEOTIDE SEQUENCE [GENOMIC DNA]</scope>
    <source>
        <strain>Vaughn / Serotype M24</strain>
    </source>
</reference>
<reference key="2">
    <citation type="journal article" date="1994" name="Mol. Microbiol.">
        <title>Non-congruent relationships between variation in emm gene sequences and the population genetic structure of group A streptococci.</title>
        <authorList>
            <person name="Whatmore A.M."/>
            <person name="Kapur V."/>
            <person name="Sullivan D.J."/>
            <person name="Musser J.M."/>
            <person name="Kehoe M.A."/>
        </authorList>
    </citation>
    <scope>NUCLEOTIDE SEQUENCE [GENOMIC DNA] OF 30-89</scope>
    <source>
        <strain>Serotype M24</strain>
    </source>
</reference>
<organism>
    <name type="scientific">Streptococcus pyogenes</name>
    <dbReference type="NCBI Taxonomy" id="1314"/>
    <lineage>
        <taxon>Bacteria</taxon>
        <taxon>Bacillati</taxon>
        <taxon>Bacillota</taxon>
        <taxon>Bacilli</taxon>
        <taxon>Lactobacillales</taxon>
        <taxon>Streptococcaceae</taxon>
        <taxon>Streptococcus</taxon>
    </lineage>
</organism>
<sequence length="539" mass="58804">MTKNNTNRHYSLRKLKTGTASVAVALTVLGAGLVVNTNEVSAVATRSQTDTLEKVQERADKFEIENNTLKLKNSDLSFNNKALKDHNDELTEELSNAKEKLRKNDKSLSEKASKIQELEARKADLEKALEGAMNFSTADSAKIKTLEAEKAALAARKADLEKALEGAMNFSTADSAKIKTLEAEKAALEARQAELEKALEGAMNFSTADSAKIKTLEAEKAALAARKADLEKALEGAMNFSTADSAKIKTLEAEKAALEARQAELEKALEGAMNFSTADSAKIKTLEAEKAALEAEKADLEHQSQVLNANRQSLRRDLDASREAKKQLEAEHQKLEEQNKISEASRQSLRRDLDASREAKKQLEAEHQKLEEQNKISEASRQSLRRDLDASREAKKQVEKALEEANSKLAALEKLNKELEESKKLTEKEKAELQAKLEAEAKALKEKLAKQAEELAKLRAGKASDSQTPDAKPGNKAVPGKGQAPQAGTKPNQNKAPMKETKRQLPSTGETANPFFTAAALTVMATAGVAAVVKRKEEN</sequence>
<feature type="signal peptide" evidence="1">
    <location>
        <begin position="1"/>
        <end position="42"/>
    </location>
</feature>
<feature type="chain" id="PRO_0000005623" description="M protein, serotype 24">
    <location>
        <begin position="43"/>
        <end position="508"/>
    </location>
</feature>
<feature type="propeptide" id="PRO_0000005624" description="Removed by sortase" evidence="2">
    <location>
        <begin position="509"/>
        <end position="539"/>
    </location>
</feature>
<feature type="repeat" description="A-1">
    <location>
        <begin position="118"/>
        <end position="152"/>
    </location>
</feature>
<feature type="repeat" description="A-2">
    <location>
        <begin position="153"/>
        <end position="187"/>
    </location>
</feature>
<feature type="repeat" description="A-3">
    <location>
        <begin position="188"/>
        <end position="222"/>
    </location>
</feature>
<feature type="repeat" description="A-4">
    <location>
        <begin position="223"/>
        <end position="257"/>
    </location>
</feature>
<feature type="repeat" description="A-5">
    <location>
        <begin position="258"/>
        <end position="292"/>
    </location>
</feature>
<feature type="repeat" description="A-6; truncated">
    <location>
        <begin position="293"/>
        <end position="297"/>
    </location>
</feature>
<feature type="repeat" description="C 1" evidence="3">
    <location>
        <begin position="298"/>
        <end position="332"/>
    </location>
</feature>
<feature type="repeat" description="C 2" evidence="3">
    <location>
        <begin position="333"/>
        <end position="367"/>
    </location>
</feature>
<feature type="repeat" description="C 3" evidence="3">
    <location>
        <begin position="368"/>
        <end position="402"/>
    </location>
</feature>
<feature type="repeat" description="D 1" evidence="4">
    <location>
        <begin position="435"/>
        <end position="440"/>
    </location>
</feature>
<feature type="repeat" description="D 2" evidence="4">
    <location>
        <begin position="441"/>
        <end position="446"/>
    </location>
</feature>
<feature type="repeat" description="D 3" evidence="4">
    <location>
        <begin position="449"/>
        <end position="454"/>
    </location>
</feature>
<feature type="repeat" description="D 4" evidence="4">
    <location>
        <begin position="456"/>
        <end position="461"/>
    </location>
</feature>
<feature type="region of interest" description="5.3 X 35 AA tandem repeats, A-type">
    <location>
        <begin position="118"/>
        <end position="301"/>
    </location>
</feature>
<feature type="region of interest" description="Disordered" evidence="5">
    <location>
        <begin position="297"/>
        <end position="401"/>
    </location>
</feature>
<feature type="region of interest" description="Disordered" evidence="5">
    <location>
        <begin position="456"/>
        <end position="511"/>
    </location>
</feature>
<feature type="short sequence motif" description="LPXTG sorting signal" evidence="2">
    <location>
        <begin position="505"/>
        <end position="509"/>
    </location>
</feature>
<feature type="compositionally biased region" description="Polar residues" evidence="5">
    <location>
        <begin position="303"/>
        <end position="312"/>
    </location>
</feature>
<feature type="compositionally biased region" description="Basic and acidic residues" evidence="5">
    <location>
        <begin position="314"/>
        <end position="340"/>
    </location>
</feature>
<feature type="compositionally biased region" description="Basic and acidic residues" evidence="5">
    <location>
        <begin position="349"/>
        <end position="375"/>
    </location>
</feature>
<feature type="compositionally biased region" description="Basic and acidic residues" evidence="5">
    <location>
        <begin position="384"/>
        <end position="401"/>
    </location>
</feature>
<feature type="modified residue" description="Pentaglycyl murein peptidoglycan amidated threonine" evidence="2">
    <location>
        <position position="508"/>
    </location>
</feature>
<keyword id="KW-0134">Cell wall</keyword>
<keyword id="KW-0175">Coiled coil</keyword>
<keyword id="KW-0572">Peptidoglycan-anchor</keyword>
<keyword id="KW-0581">Phagocytosis</keyword>
<keyword id="KW-0677">Repeat</keyword>
<keyword id="KW-0964">Secreted</keyword>
<keyword id="KW-0732">Signal</keyword>
<keyword id="KW-0843">Virulence</keyword>
<protein>
    <recommendedName>
        <fullName>M protein, serotype 24</fullName>
    </recommendedName>
</protein>
<dbReference type="EMBL" id="M19031">
    <property type="protein sequence ID" value="AAA26874.1"/>
    <property type="molecule type" value="Genomic_DNA"/>
</dbReference>
<dbReference type="PIR" id="A28549">
    <property type="entry name" value="A28549"/>
</dbReference>
<dbReference type="SMR" id="P12379"/>
<dbReference type="GO" id="GO:0005576">
    <property type="term" value="C:extracellular region"/>
    <property type="evidence" value="ECO:0007669"/>
    <property type="project" value="UniProtKB-KW"/>
</dbReference>
<dbReference type="GO" id="GO:0006909">
    <property type="term" value="P:phagocytosis"/>
    <property type="evidence" value="ECO:0007669"/>
    <property type="project" value="UniProtKB-KW"/>
</dbReference>
<dbReference type="Gene3D" id="1.10.287.1490">
    <property type="match status" value="1"/>
</dbReference>
<dbReference type="Gene3D" id="6.10.250.460">
    <property type="match status" value="3"/>
</dbReference>
<dbReference type="InterPro" id="IPR019931">
    <property type="entry name" value="LPXTG_anchor"/>
</dbReference>
<dbReference type="InterPro" id="IPR019950">
    <property type="entry name" value="M_anchor"/>
</dbReference>
<dbReference type="InterPro" id="IPR003345">
    <property type="entry name" value="M_repeat"/>
</dbReference>
<dbReference type="InterPro" id="IPR049896">
    <property type="entry name" value="SMCR"/>
</dbReference>
<dbReference type="InterPro" id="IPR049895">
    <property type="entry name" value="SMDRR"/>
</dbReference>
<dbReference type="InterPro" id="IPR005877">
    <property type="entry name" value="YSIRK_signal_dom"/>
</dbReference>
<dbReference type="NCBIfam" id="TIGR01167">
    <property type="entry name" value="LPXTG_anchor"/>
    <property type="match status" value="1"/>
</dbReference>
<dbReference type="NCBIfam" id="TIGR01168">
    <property type="entry name" value="YSIRK_signal"/>
    <property type="match status" value="1"/>
</dbReference>
<dbReference type="PANTHER" id="PTHR23159">
    <property type="entry name" value="CENTROSOMAL PROTEIN 2"/>
    <property type="match status" value="1"/>
</dbReference>
<dbReference type="PANTHER" id="PTHR23159:SF60">
    <property type="entry name" value="SPINDLE ASSEMBLY ABNORMAL PROTEIN 4"/>
    <property type="match status" value="1"/>
</dbReference>
<dbReference type="Pfam" id="PF00746">
    <property type="entry name" value="Gram_pos_anchor"/>
    <property type="match status" value="1"/>
</dbReference>
<dbReference type="Pfam" id="PF02370">
    <property type="entry name" value="M"/>
    <property type="match status" value="2"/>
</dbReference>
<dbReference type="Pfam" id="PF04650">
    <property type="entry name" value="YSIRK_signal"/>
    <property type="match status" value="1"/>
</dbReference>
<dbReference type="PRINTS" id="PR00015">
    <property type="entry name" value="GPOSANCHOR"/>
</dbReference>
<dbReference type="PROSITE" id="PS50847">
    <property type="entry name" value="GRAM_POS_ANCHORING"/>
    <property type="match status" value="1"/>
</dbReference>
<dbReference type="PROSITE" id="PS52028">
    <property type="entry name" value="SMCR"/>
    <property type="match status" value="3"/>
</dbReference>
<dbReference type="PROSITE" id="PS52030">
    <property type="entry name" value="SMDRR"/>
    <property type="match status" value="1"/>
</dbReference>
<accession>P12379</accession>